<comment type="function">
    <text evidence="1">Binds to DNA and alters its conformation. May be involved in regulation of gene expression, nucleoid organization and DNA protection.</text>
</comment>
<comment type="subunit">
    <text evidence="1">Homodimer.</text>
</comment>
<comment type="subcellular location">
    <subcellularLocation>
        <location evidence="1">Cytoplasm</location>
        <location evidence="1">Nucleoid</location>
    </subcellularLocation>
</comment>
<comment type="similarity">
    <text evidence="1">Belongs to the YbaB/EbfC family.</text>
</comment>
<sequence>MSKRPAFPGMGGMNMQQMMKQAKKLQEQMAQEQENITTQEFTGKAADDMVVATFTGDRTLKSLFIKPEAIDPDDPDMLEDLVIDAVNKGLKQIDQATQQSLGKYTKGLM</sequence>
<name>Y1634_LACDA</name>
<feature type="chain" id="PRO_1000197659" description="Nucleoid-associated protein Ldb1634">
    <location>
        <begin position="1"/>
        <end position="109"/>
    </location>
</feature>
<feature type="region of interest" description="Disordered" evidence="2">
    <location>
        <begin position="18"/>
        <end position="40"/>
    </location>
</feature>
<keyword id="KW-0963">Cytoplasm</keyword>
<keyword id="KW-0238">DNA-binding</keyword>
<keyword id="KW-1185">Reference proteome</keyword>
<evidence type="ECO:0000255" key="1">
    <source>
        <dbReference type="HAMAP-Rule" id="MF_00274"/>
    </source>
</evidence>
<evidence type="ECO:0000256" key="2">
    <source>
        <dbReference type="SAM" id="MobiDB-lite"/>
    </source>
</evidence>
<accession>Q1G920</accession>
<protein>
    <recommendedName>
        <fullName evidence="1">Nucleoid-associated protein Ldb1634</fullName>
    </recommendedName>
</protein>
<dbReference type="EMBL" id="CR954253">
    <property type="protein sequence ID" value="CAI98423.1"/>
    <property type="molecule type" value="Genomic_DNA"/>
</dbReference>
<dbReference type="RefSeq" id="WP_002876537.1">
    <property type="nucleotide sequence ID" value="NZ_JQAV01000002.1"/>
</dbReference>
<dbReference type="SMR" id="Q1G920"/>
<dbReference type="STRING" id="390333.Ldb1634"/>
<dbReference type="KEGG" id="ldb:Ldb1634"/>
<dbReference type="eggNOG" id="COG0718">
    <property type="taxonomic scope" value="Bacteria"/>
</dbReference>
<dbReference type="HOGENOM" id="CLU_140930_1_1_9"/>
<dbReference type="BioCyc" id="LDEL390333:LDB_RS07075-MONOMER"/>
<dbReference type="Proteomes" id="UP000001259">
    <property type="component" value="Chromosome"/>
</dbReference>
<dbReference type="GO" id="GO:0043590">
    <property type="term" value="C:bacterial nucleoid"/>
    <property type="evidence" value="ECO:0007669"/>
    <property type="project" value="UniProtKB-UniRule"/>
</dbReference>
<dbReference type="GO" id="GO:0005829">
    <property type="term" value="C:cytosol"/>
    <property type="evidence" value="ECO:0007669"/>
    <property type="project" value="TreeGrafter"/>
</dbReference>
<dbReference type="GO" id="GO:0003677">
    <property type="term" value="F:DNA binding"/>
    <property type="evidence" value="ECO:0007669"/>
    <property type="project" value="UniProtKB-UniRule"/>
</dbReference>
<dbReference type="Gene3D" id="3.30.1310.10">
    <property type="entry name" value="Nucleoid-associated protein YbaB-like domain"/>
    <property type="match status" value="1"/>
</dbReference>
<dbReference type="HAMAP" id="MF_00274">
    <property type="entry name" value="DNA_YbaB_EbfC"/>
    <property type="match status" value="1"/>
</dbReference>
<dbReference type="InterPro" id="IPR036894">
    <property type="entry name" value="YbaB-like_sf"/>
</dbReference>
<dbReference type="InterPro" id="IPR004401">
    <property type="entry name" value="YbaB/EbfC"/>
</dbReference>
<dbReference type="NCBIfam" id="TIGR00103">
    <property type="entry name" value="DNA_YbaB_EbfC"/>
    <property type="match status" value="1"/>
</dbReference>
<dbReference type="PANTHER" id="PTHR33449">
    <property type="entry name" value="NUCLEOID-ASSOCIATED PROTEIN YBAB"/>
    <property type="match status" value="1"/>
</dbReference>
<dbReference type="PANTHER" id="PTHR33449:SF1">
    <property type="entry name" value="NUCLEOID-ASSOCIATED PROTEIN YBAB"/>
    <property type="match status" value="1"/>
</dbReference>
<dbReference type="Pfam" id="PF02575">
    <property type="entry name" value="YbaB_DNA_bd"/>
    <property type="match status" value="1"/>
</dbReference>
<dbReference type="PIRSF" id="PIRSF004555">
    <property type="entry name" value="UCP004555"/>
    <property type="match status" value="1"/>
</dbReference>
<dbReference type="SUPFAM" id="SSF82607">
    <property type="entry name" value="YbaB-like"/>
    <property type="match status" value="1"/>
</dbReference>
<proteinExistence type="inferred from homology"/>
<reference key="1">
    <citation type="journal article" date="2006" name="Proc. Natl. Acad. Sci. U.S.A.">
        <title>The complete genome sequence of Lactobacillus bulgaricus reveals extensive and ongoing reductive evolution.</title>
        <authorList>
            <person name="van de Guchte M."/>
            <person name="Penaud S."/>
            <person name="Grimaldi C."/>
            <person name="Barbe V."/>
            <person name="Bryson K."/>
            <person name="Nicolas P."/>
            <person name="Robert C."/>
            <person name="Oztas S."/>
            <person name="Mangenot S."/>
            <person name="Couloux A."/>
            <person name="Loux V."/>
            <person name="Dervyn R."/>
            <person name="Bossy R."/>
            <person name="Bolotin A."/>
            <person name="Batto J.-M."/>
            <person name="Walunas T."/>
            <person name="Gibrat J.-F."/>
            <person name="Bessieres P."/>
            <person name="Weissenbach J."/>
            <person name="Ehrlich S.D."/>
            <person name="Maguin E."/>
        </authorList>
    </citation>
    <scope>NUCLEOTIDE SEQUENCE [LARGE SCALE GENOMIC DNA]</scope>
    <source>
        <strain>ATCC 11842 / DSM 20081 / BCRC 10696 / JCM 1002 / NBRC 13953 / NCIMB 11778 / NCTC 12712 / WDCM 00102 / Lb 14</strain>
    </source>
</reference>
<gene>
    <name type="ordered locus">Ldb1634</name>
</gene>
<organism>
    <name type="scientific">Lactobacillus delbrueckii subsp. bulgaricus (strain ATCC 11842 / DSM 20081 / BCRC 10696 / JCM 1002 / NBRC 13953 / NCIMB 11778 / NCTC 12712 / WDCM 00102 / Lb 14)</name>
    <dbReference type="NCBI Taxonomy" id="390333"/>
    <lineage>
        <taxon>Bacteria</taxon>
        <taxon>Bacillati</taxon>
        <taxon>Bacillota</taxon>
        <taxon>Bacilli</taxon>
        <taxon>Lactobacillales</taxon>
        <taxon>Lactobacillaceae</taxon>
        <taxon>Lactobacillus</taxon>
    </lineage>
</organism>